<evidence type="ECO:0000250" key="1"/>
<evidence type="ECO:0000269" key="2">
    <source>
    </source>
</evidence>
<evidence type="ECO:0000305" key="3"/>
<sequence length="562" mass="65873">MENQKVPISSVPNLKDLDMISRPIANFPPSVWGDRFINYACEDENEQAQKERQVEELKEQVRRELAAAIDKPLQQLNIIDATQRLGIAYHFENEIEESLKHIYLHTYVENTCFEGSDDLCSVALWFRLLRQDGYRVSCDVFKKFRDSEGNFKNSLMEDAKGLLELYEATHLSVNGEEMLDDALEFTKTHLELVVSHLNYPLAEQVRHALYQPQHKGLPRLEAVYFFRIYEAYDSHNEALLKLAKLDFNLLQSLHMKELSHMAKWWKSLDFATKFPFARDRLVEGYFWILGVYFEPQYSLARKIIIKVFTMISTIDDIYDAYGTLDELKLFTKAIQRWDIGSLDQLPEYMKPCYKSVLDVYNEIEEEMDNQGSLFRMHYAKEEMKKIVEGYMDEAKWCHEKYVPTFQEYMSVALVTAGYTFLTTISYLGMGEIASKEAFDWLFSHPPIIEASESVGRLMDDMRSHEFEQERGHVASGIECYMKQYGVTEEEAHDKFHKRLVKAWKDINEGCLRPYPVPKPLLMRILSLTRVIDVIYKNEDWYTHVKKPMKDKIASLLIDPMIV</sequence>
<comment type="function">
    <text evidence="2">Catalyzes the formation of beta-elemol, guaiol and bulnesol.</text>
</comment>
<comment type="cofactor">
    <cofactor evidence="1">
        <name>Mg(2+)</name>
        <dbReference type="ChEBI" id="CHEBI:18420"/>
    </cofactor>
    <cofactor evidence="1">
        <name>Mn(2+)</name>
        <dbReference type="ChEBI" id="CHEBI:29035"/>
    </cofactor>
    <text evidence="1">Binds 3 Mg(2+) or Mn(2+) ions per subunit.</text>
</comment>
<comment type="similarity">
    <text evidence="3">Belongs to the terpene synthase family. Tpsa subfamily.</text>
</comment>
<name>SPISS_SANSP</name>
<accession>E3W208</accession>
<organism>
    <name type="scientific">Santalum spicatum</name>
    <name type="common">Australian sandalwood</name>
    <dbReference type="NCBI Taxonomy" id="453088"/>
    <lineage>
        <taxon>Eukaryota</taxon>
        <taxon>Viridiplantae</taxon>
        <taxon>Streptophyta</taxon>
        <taxon>Embryophyta</taxon>
        <taxon>Tracheophyta</taxon>
        <taxon>Spermatophyta</taxon>
        <taxon>Magnoliopsida</taxon>
        <taxon>eudicotyledons</taxon>
        <taxon>Gunneridae</taxon>
        <taxon>Pentapetalae</taxon>
        <taxon>Santalales</taxon>
        <taxon>Santalaceae</taxon>
        <taxon>Santalum</taxon>
    </lineage>
</organism>
<dbReference type="EC" id="4.2.3.-"/>
<dbReference type="EMBL" id="HQ343282">
    <property type="protein sequence ID" value="ADO87006.1"/>
    <property type="molecule type" value="mRNA"/>
</dbReference>
<dbReference type="SMR" id="E3W208"/>
<dbReference type="GO" id="GO:0000287">
    <property type="term" value="F:magnesium ion binding"/>
    <property type="evidence" value="ECO:0007669"/>
    <property type="project" value="InterPro"/>
</dbReference>
<dbReference type="GO" id="GO:0010333">
    <property type="term" value="F:terpene synthase activity"/>
    <property type="evidence" value="ECO:0007669"/>
    <property type="project" value="InterPro"/>
</dbReference>
<dbReference type="GO" id="GO:0016102">
    <property type="term" value="P:diterpenoid biosynthetic process"/>
    <property type="evidence" value="ECO:0007669"/>
    <property type="project" value="InterPro"/>
</dbReference>
<dbReference type="CDD" id="cd00684">
    <property type="entry name" value="Terpene_cyclase_plant_C1"/>
    <property type="match status" value="1"/>
</dbReference>
<dbReference type="FunFam" id="1.10.600.10:FF:000007">
    <property type="entry name" value="Isoprene synthase, chloroplastic"/>
    <property type="match status" value="1"/>
</dbReference>
<dbReference type="FunFam" id="1.50.10.130:FF:000001">
    <property type="entry name" value="Isoprene synthase, chloroplastic"/>
    <property type="match status" value="1"/>
</dbReference>
<dbReference type="Gene3D" id="1.10.600.10">
    <property type="entry name" value="Farnesyl Diphosphate Synthase"/>
    <property type="match status" value="1"/>
</dbReference>
<dbReference type="Gene3D" id="1.50.10.130">
    <property type="entry name" value="Terpene synthase, N-terminal domain"/>
    <property type="match status" value="1"/>
</dbReference>
<dbReference type="InterPro" id="IPR008949">
    <property type="entry name" value="Isoprenoid_synthase_dom_sf"/>
</dbReference>
<dbReference type="InterPro" id="IPR034741">
    <property type="entry name" value="Terpene_cyclase-like_1_C"/>
</dbReference>
<dbReference type="InterPro" id="IPR044814">
    <property type="entry name" value="Terpene_cyclase_plant_C1"/>
</dbReference>
<dbReference type="InterPro" id="IPR001906">
    <property type="entry name" value="Terpene_synth_N"/>
</dbReference>
<dbReference type="InterPro" id="IPR036965">
    <property type="entry name" value="Terpene_synth_N_sf"/>
</dbReference>
<dbReference type="InterPro" id="IPR050148">
    <property type="entry name" value="Terpene_synthase-like"/>
</dbReference>
<dbReference type="InterPro" id="IPR005630">
    <property type="entry name" value="Terpene_synthase_metal-bd"/>
</dbReference>
<dbReference type="InterPro" id="IPR008930">
    <property type="entry name" value="Terpenoid_cyclase/PrenylTrfase"/>
</dbReference>
<dbReference type="PANTHER" id="PTHR31225:SF93">
    <property type="entry name" value="ALPHA-HUMULENE_(-)-(E)-BETA-CARYOPHYLLENE SYNTHASE"/>
    <property type="match status" value="1"/>
</dbReference>
<dbReference type="PANTHER" id="PTHR31225">
    <property type="entry name" value="OS04G0344100 PROTEIN-RELATED"/>
    <property type="match status" value="1"/>
</dbReference>
<dbReference type="Pfam" id="PF01397">
    <property type="entry name" value="Terpene_synth"/>
    <property type="match status" value="1"/>
</dbReference>
<dbReference type="Pfam" id="PF03936">
    <property type="entry name" value="Terpene_synth_C"/>
    <property type="match status" value="1"/>
</dbReference>
<dbReference type="SFLD" id="SFLDS00005">
    <property type="entry name" value="Isoprenoid_Synthase_Type_I"/>
    <property type="match status" value="1"/>
</dbReference>
<dbReference type="SFLD" id="SFLDG01019">
    <property type="entry name" value="Terpene_Cyclase_Like_1_C_Termi"/>
    <property type="match status" value="1"/>
</dbReference>
<dbReference type="SUPFAM" id="SSF48239">
    <property type="entry name" value="Terpenoid cyclases/Protein prenyltransferases"/>
    <property type="match status" value="1"/>
</dbReference>
<dbReference type="SUPFAM" id="SSF48576">
    <property type="entry name" value="Terpenoid synthases"/>
    <property type="match status" value="1"/>
</dbReference>
<proteinExistence type="evidence at transcript level"/>
<feature type="chain" id="PRO_0000418948" description="Sesquiterpene synthase">
    <location>
        <begin position="1"/>
        <end position="562"/>
    </location>
</feature>
<feature type="short sequence motif" description="DDXXD motif">
    <location>
        <begin position="315"/>
        <end position="319"/>
    </location>
</feature>
<feature type="binding site" evidence="1">
    <location>
        <position position="315"/>
    </location>
    <ligand>
        <name>Mg(2+)</name>
        <dbReference type="ChEBI" id="CHEBI:18420"/>
        <label>1</label>
    </ligand>
</feature>
<feature type="binding site" evidence="1">
    <location>
        <position position="315"/>
    </location>
    <ligand>
        <name>Mg(2+)</name>
        <dbReference type="ChEBI" id="CHEBI:18420"/>
        <label>2</label>
    </ligand>
</feature>
<feature type="binding site" evidence="1">
    <location>
        <position position="319"/>
    </location>
    <ligand>
        <name>Mg(2+)</name>
        <dbReference type="ChEBI" id="CHEBI:18420"/>
        <label>1</label>
    </ligand>
</feature>
<feature type="binding site" evidence="1">
    <location>
        <position position="319"/>
    </location>
    <ligand>
        <name>Mg(2+)</name>
        <dbReference type="ChEBI" id="CHEBI:18420"/>
        <label>2</label>
    </ligand>
</feature>
<feature type="binding site" evidence="1">
    <location>
        <position position="467"/>
    </location>
    <ligand>
        <name>Mg(2+)</name>
        <dbReference type="ChEBI" id="CHEBI:18420"/>
        <label>3</label>
    </ligand>
</feature>
<keyword id="KW-0456">Lyase</keyword>
<keyword id="KW-0460">Magnesium</keyword>
<keyword id="KW-0464">Manganese</keyword>
<keyword id="KW-0479">Metal-binding</keyword>
<reference key="1">
    <citation type="journal article" date="2011" name="J. Biol. Chem.">
        <title>Sandalwood fragrance biosynthesis involves sesquiterpene synthases of both the terpene synthase (TPS)-a and TPS-b Subfamilies, including santalene synthases.</title>
        <authorList>
            <person name="Jones C.G."/>
            <person name="Moniodis J."/>
            <person name="Zulak K.G."/>
            <person name="Scaffidi A."/>
            <person name="Plummer J.A."/>
            <person name="Ghisalberti E.L."/>
            <person name="Barbour E.L."/>
            <person name="Bohlmann J."/>
        </authorList>
    </citation>
    <scope>NUCLEOTIDE SEQUENCE [MRNA]</scope>
    <scope>FUNCTION</scope>
</reference>
<protein>
    <recommendedName>
        <fullName>Sesquiterpene synthase</fullName>
        <shortName>SspiSesquiTPS</shortName>
        <ecNumber>4.2.3.-</ecNumber>
    </recommendedName>
</protein>